<keyword id="KW-0067">ATP-binding</keyword>
<keyword id="KW-0963">Cytoplasm</keyword>
<keyword id="KW-0418">Kinase</keyword>
<keyword id="KW-0547">Nucleotide-binding</keyword>
<keyword id="KW-0808">Transferase</keyword>
<protein>
    <recommendedName>
        <fullName evidence="1">Cytidylate kinase</fullName>
        <shortName evidence="1">CK</shortName>
        <ecNumber evidence="1">2.7.4.25</ecNumber>
    </recommendedName>
    <alternativeName>
        <fullName evidence="1">Cytidine monophosphate kinase</fullName>
        <shortName evidence="1">CMP kinase</shortName>
    </alternativeName>
</protein>
<gene>
    <name evidence="1" type="primary">cmk</name>
    <name type="ordered locus">BCAH187_A1659</name>
</gene>
<organism>
    <name type="scientific">Bacillus cereus (strain AH187)</name>
    <dbReference type="NCBI Taxonomy" id="405534"/>
    <lineage>
        <taxon>Bacteria</taxon>
        <taxon>Bacillati</taxon>
        <taxon>Bacillota</taxon>
        <taxon>Bacilli</taxon>
        <taxon>Bacillales</taxon>
        <taxon>Bacillaceae</taxon>
        <taxon>Bacillus</taxon>
        <taxon>Bacillus cereus group</taxon>
    </lineage>
</organism>
<accession>B7HL06</accession>
<dbReference type="EC" id="2.7.4.25" evidence="1"/>
<dbReference type="EMBL" id="CP001177">
    <property type="protein sequence ID" value="ACJ79396.1"/>
    <property type="molecule type" value="Genomic_DNA"/>
</dbReference>
<dbReference type="SMR" id="B7HL06"/>
<dbReference type="KEGG" id="bcr:BCAH187_A1659"/>
<dbReference type="HOGENOM" id="CLU_079959_0_2_9"/>
<dbReference type="Proteomes" id="UP000002214">
    <property type="component" value="Chromosome"/>
</dbReference>
<dbReference type="GO" id="GO:0005829">
    <property type="term" value="C:cytosol"/>
    <property type="evidence" value="ECO:0007669"/>
    <property type="project" value="TreeGrafter"/>
</dbReference>
<dbReference type="GO" id="GO:0005524">
    <property type="term" value="F:ATP binding"/>
    <property type="evidence" value="ECO:0007669"/>
    <property type="project" value="UniProtKB-UniRule"/>
</dbReference>
<dbReference type="GO" id="GO:0036430">
    <property type="term" value="F:CMP kinase activity"/>
    <property type="evidence" value="ECO:0007669"/>
    <property type="project" value="RHEA"/>
</dbReference>
<dbReference type="GO" id="GO:0036431">
    <property type="term" value="F:dCMP kinase activity"/>
    <property type="evidence" value="ECO:0007669"/>
    <property type="project" value="RHEA"/>
</dbReference>
<dbReference type="GO" id="GO:0015949">
    <property type="term" value="P:nucleobase-containing small molecule interconversion"/>
    <property type="evidence" value="ECO:0007669"/>
    <property type="project" value="TreeGrafter"/>
</dbReference>
<dbReference type="GO" id="GO:0006220">
    <property type="term" value="P:pyrimidine nucleotide metabolic process"/>
    <property type="evidence" value="ECO:0007669"/>
    <property type="project" value="UniProtKB-UniRule"/>
</dbReference>
<dbReference type="CDD" id="cd02020">
    <property type="entry name" value="CMPK"/>
    <property type="match status" value="1"/>
</dbReference>
<dbReference type="FunFam" id="3.40.50.300:FF:000484">
    <property type="entry name" value="Cytidylate kinase"/>
    <property type="match status" value="1"/>
</dbReference>
<dbReference type="Gene3D" id="3.40.50.300">
    <property type="entry name" value="P-loop containing nucleotide triphosphate hydrolases"/>
    <property type="match status" value="1"/>
</dbReference>
<dbReference type="HAMAP" id="MF_00238">
    <property type="entry name" value="Cytidyl_kinase_type1"/>
    <property type="match status" value="1"/>
</dbReference>
<dbReference type="InterPro" id="IPR003136">
    <property type="entry name" value="Cytidylate_kin"/>
</dbReference>
<dbReference type="InterPro" id="IPR011994">
    <property type="entry name" value="Cytidylate_kinase_dom"/>
</dbReference>
<dbReference type="InterPro" id="IPR027417">
    <property type="entry name" value="P-loop_NTPase"/>
</dbReference>
<dbReference type="NCBIfam" id="TIGR00017">
    <property type="entry name" value="cmk"/>
    <property type="match status" value="1"/>
</dbReference>
<dbReference type="PANTHER" id="PTHR21299:SF2">
    <property type="entry name" value="CYTIDYLATE KINASE"/>
    <property type="match status" value="1"/>
</dbReference>
<dbReference type="PANTHER" id="PTHR21299">
    <property type="entry name" value="CYTIDYLATE KINASE/PANTOATE-BETA-ALANINE LIGASE"/>
    <property type="match status" value="1"/>
</dbReference>
<dbReference type="Pfam" id="PF02224">
    <property type="entry name" value="Cytidylate_kin"/>
    <property type="match status" value="1"/>
</dbReference>
<dbReference type="SUPFAM" id="SSF52540">
    <property type="entry name" value="P-loop containing nucleoside triphosphate hydrolases"/>
    <property type="match status" value="1"/>
</dbReference>
<comment type="catalytic activity">
    <reaction evidence="1">
        <text>CMP + ATP = CDP + ADP</text>
        <dbReference type="Rhea" id="RHEA:11600"/>
        <dbReference type="ChEBI" id="CHEBI:30616"/>
        <dbReference type="ChEBI" id="CHEBI:58069"/>
        <dbReference type="ChEBI" id="CHEBI:60377"/>
        <dbReference type="ChEBI" id="CHEBI:456216"/>
        <dbReference type="EC" id="2.7.4.25"/>
    </reaction>
</comment>
<comment type="catalytic activity">
    <reaction evidence="1">
        <text>dCMP + ATP = dCDP + ADP</text>
        <dbReference type="Rhea" id="RHEA:25094"/>
        <dbReference type="ChEBI" id="CHEBI:30616"/>
        <dbReference type="ChEBI" id="CHEBI:57566"/>
        <dbReference type="ChEBI" id="CHEBI:58593"/>
        <dbReference type="ChEBI" id="CHEBI:456216"/>
        <dbReference type="EC" id="2.7.4.25"/>
    </reaction>
</comment>
<comment type="subcellular location">
    <subcellularLocation>
        <location evidence="1">Cytoplasm</location>
    </subcellularLocation>
</comment>
<comment type="similarity">
    <text evidence="1">Belongs to the cytidylate kinase family. Type 1 subfamily.</text>
</comment>
<feature type="chain" id="PRO_1000119010" description="Cytidylate kinase">
    <location>
        <begin position="1"/>
        <end position="225"/>
    </location>
</feature>
<feature type="binding site" evidence="1">
    <location>
        <begin position="11"/>
        <end position="19"/>
    </location>
    <ligand>
        <name>ATP</name>
        <dbReference type="ChEBI" id="CHEBI:30616"/>
    </ligand>
</feature>
<name>KCY_BACC7</name>
<proteinExistence type="inferred from homology"/>
<evidence type="ECO:0000255" key="1">
    <source>
        <dbReference type="HAMAP-Rule" id="MF_00238"/>
    </source>
</evidence>
<sequence length="225" mass="25259">MDKRISIAIDGPAAAGKSTVAKVVAKKLSYVYIDTGAMYRTITYAALEQKVDIENEEQLMEVVKNVKIEFQQGENTQLVFLNGQDVSEVIRTPEVTNRVSIVAKHRLVREEMVRRQQELAEKGGVVMDGRDIGTHVLPDAEVKIFMLASVEERAERRHLENMNKGFDSNLEQLKEEIAQRDKLDSEREVSPLKKADDALELDTTSLSIEEVVQKIMGIVSGVFAK</sequence>
<reference key="1">
    <citation type="submission" date="2008-10" db="EMBL/GenBank/DDBJ databases">
        <title>Genome sequence of Bacillus cereus AH187.</title>
        <authorList>
            <person name="Dodson R.J."/>
            <person name="Durkin A.S."/>
            <person name="Rosovitz M.J."/>
            <person name="Rasko D.A."/>
            <person name="Kolsto A.B."/>
            <person name="Okstad O.A."/>
            <person name="Ravel J."/>
            <person name="Sutton G."/>
        </authorList>
    </citation>
    <scope>NUCLEOTIDE SEQUENCE [LARGE SCALE GENOMIC DNA]</scope>
    <source>
        <strain>AH187</strain>
    </source>
</reference>